<sequence length="162" mass="17746">MKVVLQRVSEASVDVVNELGTLDPTFEPQQIGPGFMILVGVTDGDGDKQIAWLAHKILNLRVFEDAQGKMNRSIQDIGGEILSISQFTLFADVHKGNRPSFIKAGKPEHADLMWIKFNEALRSGGVPVKEGRFGAHMRVGLVNDGPVTIVIDTEHDMPDGTR</sequence>
<comment type="function">
    <text evidence="1">An aminoacyl-tRNA editing enzyme that deacylates mischarged D-aminoacyl-tRNAs. Also deacylates mischarged glycyl-tRNA(Ala), protecting cells against glycine mischarging by AlaRS. Acts via tRNA-based rather than protein-based catalysis; rejects L-amino acids rather than detecting D-amino acids in the active site. By recycling D-aminoacyl-tRNA to D-amino acids and free tRNA molecules, this enzyme counteracts the toxicity associated with the formation of D-aminoacyl-tRNA entities in vivo and helps enforce protein L-homochirality.</text>
</comment>
<comment type="catalytic activity">
    <reaction evidence="1">
        <text>glycyl-tRNA(Ala) + H2O = tRNA(Ala) + glycine + H(+)</text>
        <dbReference type="Rhea" id="RHEA:53744"/>
        <dbReference type="Rhea" id="RHEA-COMP:9657"/>
        <dbReference type="Rhea" id="RHEA-COMP:13640"/>
        <dbReference type="ChEBI" id="CHEBI:15377"/>
        <dbReference type="ChEBI" id="CHEBI:15378"/>
        <dbReference type="ChEBI" id="CHEBI:57305"/>
        <dbReference type="ChEBI" id="CHEBI:78442"/>
        <dbReference type="ChEBI" id="CHEBI:78522"/>
        <dbReference type="EC" id="3.1.1.96"/>
    </reaction>
</comment>
<comment type="catalytic activity">
    <reaction evidence="1">
        <text>a D-aminoacyl-tRNA + H2O = a tRNA + a D-alpha-amino acid + H(+)</text>
        <dbReference type="Rhea" id="RHEA:13953"/>
        <dbReference type="Rhea" id="RHEA-COMP:10123"/>
        <dbReference type="Rhea" id="RHEA-COMP:10124"/>
        <dbReference type="ChEBI" id="CHEBI:15377"/>
        <dbReference type="ChEBI" id="CHEBI:15378"/>
        <dbReference type="ChEBI" id="CHEBI:59871"/>
        <dbReference type="ChEBI" id="CHEBI:78442"/>
        <dbReference type="ChEBI" id="CHEBI:79333"/>
        <dbReference type="EC" id="3.1.1.96"/>
    </reaction>
</comment>
<comment type="subunit">
    <text evidence="1">Homodimer.</text>
</comment>
<comment type="subcellular location">
    <subcellularLocation>
        <location evidence="1">Cytoplasm</location>
    </subcellularLocation>
</comment>
<comment type="domain">
    <text evidence="1">A Gly-cisPro motif from one monomer fits into the active site of the other monomer to allow specific chiral rejection of L-amino acids.</text>
</comment>
<comment type="similarity">
    <text evidence="1">Belongs to the DTD family.</text>
</comment>
<comment type="sequence caution" evidence="2">
    <conflict type="erroneous initiation">
        <sequence resource="EMBL-CDS" id="AAN25126"/>
    </conflict>
    <text>Truncated N-terminus.</text>
</comment>
<gene>
    <name evidence="1" type="primary">dtd</name>
    <name type="ordered locus">BL1326</name>
</gene>
<feature type="chain" id="PRO_0000164525" description="D-aminoacyl-tRNA deacylase">
    <location>
        <begin position="1"/>
        <end position="162"/>
    </location>
</feature>
<feature type="short sequence motif" description="Gly-cisPro motif, important for rejection of L-amino acids" evidence="1">
    <location>
        <begin position="145"/>
        <end position="146"/>
    </location>
</feature>
<accession>Q8G4Q2</accession>
<evidence type="ECO:0000255" key="1">
    <source>
        <dbReference type="HAMAP-Rule" id="MF_00518"/>
    </source>
</evidence>
<evidence type="ECO:0000305" key="2"/>
<reference key="1">
    <citation type="journal article" date="2002" name="Proc. Natl. Acad. Sci. U.S.A.">
        <title>The genome sequence of Bifidobacterium longum reflects its adaptation to the human gastrointestinal tract.</title>
        <authorList>
            <person name="Schell M.A."/>
            <person name="Karmirantzou M."/>
            <person name="Snel B."/>
            <person name="Vilanova D."/>
            <person name="Berger B."/>
            <person name="Pessi G."/>
            <person name="Zwahlen M.-C."/>
            <person name="Desiere F."/>
            <person name="Bork P."/>
            <person name="Delley M."/>
            <person name="Pridmore R.D."/>
            <person name="Arigoni F."/>
        </authorList>
    </citation>
    <scope>NUCLEOTIDE SEQUENCE [LARGE SCALE GENOMIC DNA]</scope>
    <source>
        <strain>NCC 2705</strain>
    </source>
</reference>
<dbReference type="EC" id="3.1.1.96" evidence="1"/>
<dbReference type="EMBL" id="AE014295">
    <property type="protein sequence ID" value="AAN25126.1"/>
    <property type="status" value="ALT_INIT"/>
    <property type="molecule type" value="Genomic_DNA"/>
</dbReference>
<dbReference type="RefSeq" id="NP_696490.1">
    <property type="nucleotide sequence ID" value="NC_004307.2"/>
</dbReference>
<dbReference type="SMR" id="Q8G4Q2"/>
<dbReference type="STRING" id="206672.BL1326"/>
<dbReference type="EnsemblBacteria" id="AAN25126">
    <property type="protein sequence ID" value="AAN25126"/>
    <property type="gene ID" value="BL1326"/>
</dbReference>
<dbReference type="KEGG" id="blo:BL1326"/>
<dbReference type="PATRIC" id="fig|206672.9.peg.181"/>
<dbReference type="HOGENOM" id="CLU_076901_1_0_11"/>
<dbReference type="OrthoDB" id="9801395at2"/>
<dbReference type="Proteomes" id="UP000000439">
    <property type="component" value="Chromosome"/>
</dbReference>
<dbReference type="GO" id="GO:0005737">
    <property type="term" value="C:cytoplasm"/>
    <property type="evidence" value="ECO:0007669"/>
    <property type="project" value="UniProtKB-SubCell"/>
</dbReference>
<dbReference type="GO" id="GO:0051500">
    <property type="term" value="F:D-tyrosyl-tRNA(Tyr) deacylase activity"/>
    <property type="evidence" value="ECO:0007669"/>
    <property type="project" value="TreeGrafter"/>
</dbReference>
<dbReference type="GO" id="GO:0106026">
    <property type="term" value="F:Gly-tRNA(Ala) deacylase activity"/>
    <property type="evidence" value="ECO:0007669"/>
    <property type="project" value="UniProtKB-UniRule"/>
</dbReference>
<dbReference type="GO" id="GO:0043908">
    <property type="term" value="F:Ser(Gly)-tRNA(Ala) hydrolase activity"/>
    <property type="evidence" value="ECO:0007669"/>
    <property type="project" value="UniProtKB-UniRule"/>
</dbReference>
<dbReference type="GO" id="GO:0000049">
    <property type="term" value="F:tRNA binding"/>
    <property type="evidence" value="ECO:0007669"/>
    <property type="project" value="UniProtKB-UniRule"/>
</dbReference>
<dbReference type="GO" id="GO:0019478">
    <property type="term" value="P:D-amino acid catabolic process"/>
    <property type="evidence" value="ECO:0007669"/>
    <property type="project" value="UniProtKB-UniRule"/>
</dbReference>
<dbReference type="FunFam" id="3.50.80.10:FF:000001">
    <property type="entry name" value="D-aminoacyl-tRNA deacylase"/>
    <property type="match status" value="1"/>
</dbReference>
<dbReference type="Gene3D" id="3.50.80.10">
    <property type="entry name" value="D-tyrosyl-tRNA(Tyr) deacylase"/>
    <property type="match status" value="1"/>
</dbReference>
<dbReference type="HAMAP" id="MF_00518">
    <property type="entry name" value="Deacylase_Dtd"/>
    <property type="match status" value="1"/>
</dbReference>
<dbReference type="InterPro" id="IPR003732">
    <property type="entry name" value="Daa-tRNA_deacyls_DTD"/>
</dbReference>
<dbReference type="InterPro" id="IPR023509">
    <property type="entry name" value="DTD-like_sf"/>
</dbReference>
<dbReference type="NCBIfam" id="TIGR00256">
    <property type="entry name" value="D-aminoacyl-tRNA deacylase"/>
    <property type="match status" value="1"/>
</dbReference>
<dbReference type="PANTHER" id="PTHR10472:SF5">
    <property type="entry name" value="D-AMINOACYL-TRNA DEACYLASE 1"/>
    <property type="match status" value="1"/>
</dbReference>
<dbReference type="PANTHER" id="PTHR10472">
    <property type="entry name" value="D-TYROSYL-TRNA TYR DEACYLASE"/>
    <property type="match status" value="1"/>
</dbReference>
<dbReference type="Pfam" id="PF02580">
    <property type="entry name" value="Tyr_Deacylase"/>
    <property type="match status" value="1"/>
</dbReference>
<dbReference type="SUPFAM" id="SSF69500">
    <property type="entry name" value="DTD-like"/>
    <property type="match status" value="1"/>
</dbReference>
<organism>
    <name type="scientific">Bifidobacterium longum (strain NCC 2705)</name>
    <dbReference type="NCBI Taxonomy" id="206672"/>
    <lineage>
        <taxon>Bacteria</taxon>
        <taxon>Bacillati</taxon>
        <taxon>Actinomycetota</taxon>
        <taxon>Actinomycetes</taxon>
        <taxon>Bifidobacteriales</taxon>
        <taxon>Bifidobacteriaceae</taxon>
        <taxon>Bifidobacterium</taxon>
    </lineage>
</organism>
<proteinExistence type="inferred from homology"/>
<keyword id="KW-0963">Cytoplasm</keyword>
<keyword id="KW-0378">Hydrolase</keyword>
<keyword id="KW-1185">Reference proteome</keyword>
<keyword id="KW-0694">RNA-binding</keyword>
<keyword id="KW-0820">tRNA-binding</keyword>
<name>DTD_BIFLO</name>
<protein>
    <recommendedName>
        <fullName evidence="1">D-aminoacyl-tRNA deacylase</fullName>
        <shortName evidence="1">DTD</shortName>
        <ecNumber evidence="1">3.1.1.96</ecNumber>
    </recommendedName>
    <alternativeName>
        <fullName evidence="1">Gly-tRNA(Ala) deacylase</fullName>
    </alternativeName>
</protein>